<name>PHSM_KLEPN</name>
<reference key="1">
    <citation type="journal article" date="1986" name="J. Bacteriol.">
        <title>Comparison of the malA regions of Escherichia coli and Klebsiella pneumoniae.</title>
        <authorList>
            <person name="Bloch M.-A."/>
            <person name="Raibaud O."/>
        </authorList>
    </citation>
    <scope>NUCLEOTIDE SEQUENCE [GENOMIC DNA]</scope>
</reference>
<evidence type="ECO:0000305" key="1"/>
<feature type="chain" id="PRO_0000188561" description="Maltodextrin phosphorylase">
    <location>
        <begin position="1"/>
        <end position="108" status="greater than"/>
    </location>
</feature>
<feature type="non-terminal residue">
    <location>
        <position position="108"/>
    </location>
</feature>
<accession>P07094</accession>
<proteinExistence type="inferred from homology"/>
<dbReference type="EC" id="2.4.1.1"/>
<dbReference type="EMBL" id="M14735">
    <property type="protein sequence ID" value="AAA25086.1"/>
    <property type="molecule type" value="Genomic_DNA"/>
</dbReference>
<dbReference type="SMR" id="P07094"/>
<dbReference type="CAZy" id="GT35">
    <property type="family name" value="Glycosyltransferase Family 35"/>
</dbReference>
<dbReference type="GO" id="GO:0004645">
    <property type="term" value="F:1,4-alpha-oligoglucan phosphorylase activity"/>
    <property type="evidence" value="ECO:0007669"/>
    <property type="project" value="UniProtKB-EC"/>
</dbReference>
<dbReference type="Gene3D" id="3.40.50.2000">
    <property type="entry name" value="Glycogen Phosphorylase B"/>
    <property type="match status" value="1"/>
</dbReference>
<dbReference type="SUPFAM" id="SSF53756">
    <property type="entry name" value="UDP-Glycosyltransferase/glycogen phosphorylase"/>
    <property type="match status" value="1"/>
</dbReference>
<sequence length="108" mass="12325">MSQTSFNKAQFQAALTRQWQHFGLQSASEMTQRQWWRAVSGALSELLSAQPVAKATEGERHVNYISMEFLIGRLTGNNLLNLGWYQQVSDELQAHDVNLTDLLEEEID</sequence>
<protein>
    <recommendedName>
        <fullName>Maltodextrin phosphorylase</fullName>
        <ecNumber>2.4.1.1</ecNumber>
    </recommendedName>
</protein>
<organism>
    <name type="scientific">Klebsiella pneumoniae</name>
    <dbReference type="NCBI Taxonomy" id="573"/>
    <lineage>
        <taxon>Bacteria</taxon>
        <taxon>Pseudomonadati</taxon>
        <taxon>Pseudomonadota</taxon>
        <taxon>Gammaproteobacteria</taxon>
        <taxon>Enterobacterales</taxon>
        <taxon>Enterobacteriaceae</taxon>
        <taxon>Klebsiella/Raoultella group</taxon>
        <taxon>Klebsiella</taxon>
        <taxon>Klebsiella pneumoniae complex</taxon>
    </lineage>
</organism>
<keyword id="KW-0021">Allosteric enzyme</keyword>
<keyword id="KW-0119">Carbohydrate metabolism</keyword>
<keyword id="KW-0328">Glycosyltransferase</keyword>
<keyword id="KW-0663">Pyridoxal phosphate</keyword>
<keyword id="KW-0808">Transferase</keyword>
<gene>
    <name type="primary">malP</name>
</gene>
<comment type="function">
    <text>Phosphorylase is an important allosteric enzyme in carbohydrate metabolism. Enzymes from different sources differ in their regulatory mechanisms and in their natural substrates. However, all known phosphorylases share catalytic and structural properties.</text>
</comment>
<comment type="catalytic activity">
    <reaction>
        <text>[(1-&gt;4)-alpha-D-glucosyl](n) + phosphate = [(1-&gt;4)-alpha-D-glucosyl](n-1) + alpha-D-glucose 1-phosphate</text>
        <dbReference type="Rhea" id="RHEA:41732"/>
        <dbReference type="Rhea" id="RHEA-COMP:9584"/>
        <dbReference type="Rhea" id="RHEA-COMP:9586"/>
        <dbReference type="ChEBI" id="CHEBI:15444"/>
        <dbReference type="ChEBI" id="CHEBI:43474"/>
        <dbReference type="ChEBI" id="CHEBI:58601"/>
        <dbReference type="EC" id="2.4.1.1"/>
    </reaction>
</comment>
<comment type="cofactor">
    <cofactor>
        <name>pyridoxal 5'-phosphate</name>
        <dbReference type="ChEBI" id="CHEBI:597326"/>
    </cofactor>
</comment>
<comment type="similarity">
    <text evidence="1">Belongs to the glycogen phosphorylase family.</text>
</comment>